<accession>Q9D8C2</accession>
<accession>A7NSH9</accession>
<accession>Q3TMS0</accession>
<accession>Q8BTH3</accession>
<proteinExistence type="evidence at protein level"/>
<gene>
    <name type="primary">Tspan13</name>
    <name type="synonym">Tm4sf13</name>
</gene>
<evidence type="ECO:0000250" key="1"/>
<evidence type="ECO:0000255" key="2"/>
<evidence type="ECO:0000305" key="3"/>
<evidence type="ECO:0007744" key="4">
    <source>
    </source>
</evidence>
<reference key="1">
    <citation type="journal article" date="2005" name="Science">
        <title>The transcriptional landscape of the mammalian genome.</title>
        <authorList>
            <person name="Carninci P."/>
            <person name="Kasukawa T."/>
            <person name="Katayama S."/>
            <person name="Gough J."/>
            <person name="Frith M.C."/>
            <person name="Maeda N."/>
            <person name="Oyama R."/>
            <person name="Ravasi T."/>
            <person name="Lenhard B."/>
            <person name="Wells C."/>
            <person name="Kodzius R."/>
            <person name="Shimokawa K."/>
            <person name="Bajic V.B."/>
            <person name="Brenner S.E."/>
            <person name="Batalov S."/>
            <person name="Forrest A.R."/>
            <person name="Zavolan M."/>
            <person name="Davis M.J."/>
            <person name="Wilming L.G."/>
            <person name="Aidinis V."/>
            <person name="Allen J.E."/>
            <person name="Ambesi-Impiombato A."/>
            <person name="Apweiler R."/>
            <person name="Aturaliya R.N."/>
            <person name="Bailey T.L."/>
            <person name="Bansal M."/>
            <person name="Baxter L."/>
            <person name="Beisel K.W."/>
            <person name="Bersano T."/>
            <person name="Bono H."/>
            <person name="Chalk A.M."/>
            <person name="Chiu K.P."/>
            <person name="Choudhary V."/>
            <person name="Christoffels A."/>
            <person name="Clutterbuck D.R."/>
            <person name="Crowe M.L."/>
            <person name="Dalla E."/>
            <person name="Dalrymple B.P."/>
            <person name="de Bono B."/>
            <person name="Della Gatta G."/>
            <person name="di Bernardo D."/>
            <person name="Down T."/>
            <person name="Engstrom P."/>
            <person name="Fagiolini M."/>
            <person name="Faulkner G."/>
            <person name="Fletcher C.F."/>
            <person name="Fukushima T."/>
            <person name="Furuno M."/>
            <person name="Futaki S."/>
            <person name="Gariboldi M."/>
            <person name="Georgii-Hemming P."/>
            <person name="Gingeras T.R."/>
            <person name="Gojobori T."/>
            <person name="Green R.E."/>
            <person name="Gustincich S."/>
            <person name="Harbers M."/>
            <person name="Hayashi Y."/>
            <person name="Hensch T.K."/>
            <person name="Hirokawa N."/>
            <person name="Hill D."/>
            <person name="Huminiecki L."/>
            <person name="Iacono M."/>
            <person name="Ikeo K."/>
            <person name="Iwama A."/>
            <person name="Ishikawa T."/>
            <person name="Jakt M."/>
            <person name="Kanapin A."/>
            <person name="Katoh M."/>
            <person name="Kawasawa Y."/>
            <person name="Kelso J."/>
            <person name="Kitamura H."/>
            <person name="Kitano H."/>
            <person name="Kollias G."/>
            <person name="Krishnan S.P."/>
            <person name="Kruger A."/>
            <person name="Kummerfeld S.K."/>
            <person name="Kurochkin I.V."/>
            <person name="Lareau L.F."/>
            <person name="Lazarevic D."/>
            <person name="Lipovich L."/>
            <person name="Liu J."/>
            <person name="Liuni S."/>
            <person name="McWilliam S."/>
            <person name="Madan Babu M."/>
            <person name="Madera M."/>
            <person name="Marchionni L."/>
            <person name="Matsuda H."/>
            <person name="Matsuzawa S."/>
            <person name="Miki H."/>
            <person name="Mignone F."/>
            <person name="Miyake S."/>
            <person name="Morris K."/>
            <person name="Mottagui-Tabar S."/>
            <person name="Mulder N."/>
            <person name="Nakano N."/>
            <person name="Nakauchi H."/>
            <person name="Ng P."/>
            <person name="Nilsson R."/>
            <person name="Nishiguchi S."/>
            <person name="Nishikawa S."/>
            <person name="Nori F."/>
            <person name="Ohara O."/>
            <person name="Okazaki Y."/>
            <person name="Orlando V."/>
            <person name="Pang K.C."/>
            <person name="Pavan W.J."/>
            <person name="Pavesi G."/>
            <person name="Pesole G."/>
            <person name="Petrovsky N."/>
            <person name="Piazza S."/>
            <person name="Reed J."/>
            <person name="Reid J.F."/>
            <person name="Ring B.Z."/>
            <person name="Ringwald M."/>
            <person name="Rost B."/>
            <person name="Ruan Y."/>
            <person name="Salzberg S.L."/>
            <person name="Sandelin A."/>
            <person name="Schneider C."/>
            <person name="Schoenbach C."/>
            <person name="Sekiguchi K."/>
            <person name="Semple C.A."/>
            <person name="Seno S."/>
            <person name="Sessa L."/>
            <person name="Sheng Y."/>
            <person name="Shibata Y."/>
            <person name="Shimada H."/>
            <person name="Shimada K."/>
            <person name="Silva D."/>
            <person name="Sinclair B."/>
            <person name="Sperling S."/>
            <person name="Stupka E."/>
            <person name="Sugiura K."/>
            <person name="Sultana R."/>
            <person name="Takenaka Y."/>
            <person name="Taki K."/>
            <person name="Tammoja K."/>
            <person name="Tan S.L."/>
            <person name="Tang S."/>
            <person name="Taylor M.S."/>
            <person name="Tegner J."/>
            <person name="Teichmann S.A."/>
            <person name="Ueda H.R."/>
            <person name="van Nimwegen E."/>
            <person name="Verardo R."/>
            <person name="Wei C.L."/>
            <person name="Yagi K."/>
            <person name="Yamanishi H."/>
            <person name="Zabarovsky E."/>
            <person name="Zhu S."/>
            <person name="Zimmer A."/>
            <person name="Hide W."/>
            <person name="Bult C."/>
            <person name="Grimmond S.M."/>
            <person name="Teasdale R.D."/>
            <person name="Liu E.T."/>
            <person name="Brusic V."/>
            <person name="Quackenbush J."/>
            <person name="Wahlestedt C."/>
            <person name="Mattick J.S."/>
            <person name="Hume D.A."/>
            <person name="Kai C."/>
            <person name="Sasaki D."/>
            <person name="Tomaru Y."/>
            <person name="Fukuda S."/>
            <person name="Kanamori-Katayama M."/>
            <person name="Suzuki M."/>
            <person name="Aoki J."/>
            <person name="Arakawa T."/>
            <person name="Iida J."/>
            <person name="Imamura K."/>
            <person name="Itoh M."/>
            <person name="Kato T."/>
            <person name="Kawaji H."/>
            <person name="Kawagashira N."/>
            <person name="Kawashima T."/>
            <person name="Kojima M."/>
            <person name="Kondo S."/>
            <person name="Konno H."/>
            <person name="Nakano K."/>
            <person name="Ninomiya N."/>
            <person name="Nishio T."/>
            <person name="Okada M."/>
            <person name="Plessy C."/>
            <person name="Shibata K."/>
            <person name="Shiraki T."/>
            <person name="Suzuki S."/>
            <person name="Tagami M."/>
            <person name="Waki K."/>
            <person name="Watahiki A."/>
            <person name="Okamura-Oho Y."/>
            <person name="Suzuki H."/>
            <person name="Kawai J."/>
            <person name="Hayashizaki Y."/>
        </authorList>
    </citation>
    <scope>NUCLEOTIDE SEQUENCE [LARGE SCALE MRNA]</scope>
    <source>
        <strain>C57BL/6J</strain>
        <strain>DBA/2J</strain>
        <tissue>Brain</tissue>
        <tissue>Placenta</tissue>
        <tissue>Seminal vesicle</tissue>
        <tissue>Visual cortex</tissue>
    </source>
</reference>
<reference key="2">
    <citation type="journal article" date="2009" name="PLoS Biol.">
        <title>Lineage-specific biology revealed by a finished genome assembly of the mouse.</title>
        <authorList>
            <person name="Church D.M."/>
            <person name="Goodstadt L."/>
            <person name="Hillier L.W."/>
            <person name="Zody M.C."/>
            <person name="Goldstein S."/>
            <person name="She X."/>
            <person name="Bult C.J."/>
            <person name="Agarwala R."/>
            <person name="Cherry J.L."/>
            <person name="DiCuccio M."/>
            <person name="Hlavina W."/>
            <person name="Kapustin Y."/>
            <person name="Meric P."/>
            <person name="Maglott D."/>
            <person name="Birtle Z."/>
            <person name="Marques A.C."/>
            <person name="Graves T."/>
            <person name="Zhou S."/>
            <person name="Teague B."/>
            <person name="Potamousis K."/>
            <person name="Churas C."/>
            <person name="Place M."/>
            <person name="Herschleb J."/>
            <person name="Runnheim R."/>
            <person name="Forrest D."/>
            <person name="Amos-Landgraf J."/>
            <person name="Schwartz D.C."/>
            <person name="Cheng Z."/>
            <person name="Lindblad-Toh K."/>
            <person name="Eichler E.E."/>
            <person name="Ponting C.P."/>
        </authorList>
    </citation>
    <scope>NUCLEOTIDE SEQUENCE [LARGE SCALE GENOMIC DNA]</scope>
    <source>
        <strain>C57BL/6J</strain>
    </source>
</reference>
<reference key="3">
    <citation type="journal article" date="2004" name="Genome Res.">
        <title>The status, quality, and expansion of the NIH full-length cDNA project: the Mammalian Gene Collection (MGC).</title>
        <authorList>
            <consortium name="The MGC Project Team"/>
        </authorList>
    </citation>
    <scope>NUCLEOTIDE SEQUENCE [LARGE SCALE MRNA]</scope>
    <source>
        <strain>FVB/N</strain>
        <tissue>Salivary gland</tissue>
    </source>
</reference>
<reference key="4">
    <citation type="journal article" date="2010" name="Cell">
        <title>A tissue-specific atlas of mouse protein phosphorylation and expression.</title>
        <authorList>
            <person name="Huttlin E.L."/>
            <person name="Jedrychowski M.P."/>
            <person name="Elias J.E."/>
            <person name="Goswami T."/>
            <person name="Rad R."/>
            <person name="Beausoleil S.A."/>
            <person name="Villen J."/>
            <person name="Haas W."/>
            <person name="Sowa M.E."/>
            <person name="Gygi S.P."/>
        </authorList>
    </citation>
    <scope>PHOSPHORYLATION [LARGE SCALE ANALYSIS] AT SER-143</scope>
    <scope>IDENTIFICATION BY MASS SPECTROMETRY [LARGE SCALE ANALYSIS]</scope>
    <source>
        <tissue>Lung</tissue>
        <tissue>Pancreas</tissue>
    </source>
</reference>
<name>TSN13_MOUSE</name>
<protein>
    <recommendedName>
        <fullName>Tetraspanin-13</fullName>
        <shortName>Tspan-13</shortName>
    </recommendedName>
    <alternativeName>
        <fullName>Transmembrane 4 superfamily member 13</fullName>
    </alternativeName>
</protein>
<feature type="chain" id="PRO_0000219259" description="Tetraspanin-13">
    <location>
        <begin position="1"/>
        <end position="204"/>
    </location>
</feature>
<feature type="topological domain" description="Cytoplasmic" evidence="2">
    <location>
        <begin position="1"/>
        <end position="19"/>
    </location>
</feature>
<feature type="transmembrane region" description="Helical" evidence="2">
    <location>
        <begin position="20"/>
        <end position="40"/>
    </location>
</feature>
<feature type="topological domain" description="Extracellular" evidence="2">
    <location>
        <begin position="41"/>
        <end position="44"/>
    </location>
</feature>
<feature type="transmembrane region" description="Helical" evidence="2">
    <location>
        <begin position="45"/>
        <end position="65"/>
    </location>
</feature>
<feature type="topological domain" description="Cytoplasmic" evidence="2">
    <location>
        <begin position="66"/>
        <end position="72"/>
    </location>
</feature>
<feature type="transmembrane region" description="Helical" evidence="2">
    <location>
        <begin position="73"/>
        <end position="93"/>
    </location>
</feature>
<feature type="topological domain" description="Extracellular" evidence="2">
    <location>
        <begin position="94"/>
        <end position="167"/>
    </location>
</feature>
<feature type="transmembrane region" description="Helical" evidence="2">
    <location>
        <begin position="168"/>
        <end position="188"/>
    </location>
</feature>
<feature type="topological domain" description="Cytoplasmic" evidence="2">
    <location>
        <begin position="189"/>
        <end position="204"/>
    </location>
</feature>
<feature type="modified residue" description="Phosphoserine" evidence="4">
    <location>
        <position position="143"/>
    </location>
</feature>
<feature type="glycosylation site" description="N-linked (GlcNAc...) asparagine" evidence="1">
    <location>
        <position position="113"/>
    </location>
</feature>
<feature type="glycosylation site" description="N-linked (GlcNAc...) asparagine" evidence="1">
    <location>
        <position position="137"/>
    </location>
</feature>
<feature type="sequence conflict" description="In Ref. 1; BAC41170." evidence="3" ref="1">
    <original>L</original>
    <variation>S</variation>
    <location>
        <position position="97"/>
    </location>
</feature>
<feature type="sequence conflict" description="In Ref. 1; BAC41170." evidence="3" ref="1">
    <original>I</original>
    <variation>M</variation>
    <location>
        <position position="157"/>
    </location>
</feature>
<comment type="subcellular location">
    <subcellularLocation>
        <location evidence="3">Membrane</location>
        <topology evidence="3">Multi-pass membrane protein</topology>
    </subcellularLocation>
</comment>
<comment type="similarity">
    <text evidence="3">Belongs to the tetraspanin (TM4SF) family.</text>
</comment>
<dbReference type="EMBL" id="AK008175">
    <property type="protein sequence ID" value="BAB25510.1"/>
    <property type="molecule type" value="mRNA"/>
</dbReference>
<dbReference type="EMBL" id="AK090217">
    <property type="protein sequence ID" value="BAC41139.1"/>
    <property type="molecule type" value="mRNA"/>
</dbReference>
<dbReference type="EMBL" id="AK090322">
    <property type="protein sequence ID" value="BAC41170.1"/>
    <property type="molecule type" value="mRNA"/>
</dbReference>
<dbReference type="EMBL" id="AK158761">
    <property type="protein sequence ID" value="BAE34648.1"/>
    <property type="molecule type" value="mRNA"/>
</dbReference>
<dbReference type="EMBL" id="AK165768">
    <property type="protein sequence ID" value="BAE38371.1"/>
    <property type="molecule type" value="mRNA"/>
</dbReference>
<dbReference type="EMBL" id="AK167495">
    <property type="protein sequence ID" value="BAE39572.1"/>
    <property type="molecule type" value="mRNA"/>
</dbReference>
<dbReference type="EMBL" id="AK167979">
    <property type="protein sequence ID" value="BAE39971.1"/>
    <property type="molecule type" value="mRNA"/>
</dbReference>
<dbReference type="EMBL" id="CT030196">
    <property type="status" value="NOT_ANNOTATED_CDS"/>
    <property type="molecule type" value="Genomic_DNA"/>
</dbReference>
<dbReference type="EMBL" id="BC018317">
    <property type="protein sequence ID" value="AAH18317.1"/>
    <property type="molecule type" value="mRNA"/>
</dbReference>
<dbReference type="CCDS" id="CCDS25882.1"/>
<dbReference type="RefSeq" id="NP_079635.1">
    <property type="nucleotide sequence ID" value="NM_025359.3"/>
</dbReference>
<dbReference type="SMR" id="Q9D8C2"/>
<dbReference type="FunCoup" id="Q9D8C2">
    <property type="interactions" value="677"/>
</dbReference>
<dbReference type="STRING" id="10090.ENSMUSP00000020896"/>
<dbReference type="TCDB" id="8.A.40.1.8">
    <property type="family name" value="the tetraspanin (tetraspanin) family"/>
</dbReference>
<dbReference type="GlyConnect" id="2759">
    <property type="glycosylation" value="1 N-Linked glycan (1 site)"/>
</dbReference>
<dbReference type="GlyCosmos" id="Q9D8C2">
    <property type="glycosylation" value="2 sites, 1 glycan"/>
</dbReference>
<dbReference type="GlyGen" id="Q9D8C2">
    <property type="glycosylation" value="2 sites, 2 N-linked glycans (2 sites)"/>
</dbReference>
<dbReference type="iPTMnet" id="Q9D8C2"/>
<dbReference type="PhosphoSitePlus" id="Q9D8C2"/>
<dbReference type="SwissPalm" id="Q9D8C2"/>
<dbReference type="PaxDb" id="10090-ENSMUSP00000020896"/>
<dbReference type="ProteomicsDB" id="297983"/>
<dbReference type="Antibodypedia" id="25268">
    <property type="antibodies" value="103 antibodies from 22 providers"/>
</dbReference>
<dbReference type="DNASU" id="66109"/>
<dbReference type="Ensembl" id="ENSMUST00000020896.17">
    <property type="protein sequence ID" value="ENSMUSP00000020896.9"/>
    <property type="gene ID" value="ENSMUSG00000020577.18"/>
</dbReference>
<dbReference type="GeneID" id="66109"/>
<dbReference type="KEGG" id="mmu:66109"/>
<dbReference type="UCSC" id="uc007njn.1">
    <property type="organism name" value="mouse"/>
</dbReference>
<dbReference type="AGR" id="MGI:1913359"/>
<dbReference type="CTD" id="27075"/>
<dbReference type="MGI" id="MGI:1913359">
    <property type="gene designation" value="Tspan13"/>
</dbReference>
<dbReference type="VEuPathDB" id="HostDB:ENSMUSG00000020577"/>
<dbReference type="eggNOG" id="KOG3882">
    <property type="taxonomic scope" value="Eukaryota"/>
</dbReference>
<dbReference type="GeneTree" id="ENSGT00940000157010"/>
<dbReference type="HOGENOM" id="CLU_088363_0_0_1"/>
<dbReference type="InParanoid" id="Q9D8C2"/>
<dbReference type="OMA" id="CPPCAPI"/>
<dbReference type="OrthoDB" id="5845060at2759"/>
<dbReference type="PhylomeDB" id="Q9D8C2"/>
<dbReference type="TreeFam" id="TF323367"/>
<dbReference type="BioGRID-ORCS" id="66109">
    <property type="hits" value="1 hit in 79 CRISPR screens"/>
</dbReference>
<dbReference type="ChiTaRS" id="Tspan13">
    <property type="organism name" value="mouse"/>
</dbReference>
<dbReference type="PRO" id="PR:Q9D8C2"/>
<dbReference type="Proteomes" id="UP000000589">
    <property type="component" value="Chromosome 12"/>
</dbReference>
<dbReference type="RNAct" id="Q9D8C2">
    <property type="molecule type" value="protein"/>
</dbReference>
<dbReference type="Bgee" id="ENSMUSG00000020577">
    <property type="expression patterns" value="Expressed in habenula and 276 other cell types or tissues"/>
</dbReference>
<dbReference type="ExpressionAtlas" id="Q9D8C2">
    <property type="expression patterns" value="baseline and differential"/>
</dbReference>
<dbReference type="GO" id="GO:0005886">
    <property type="term" value="C:plasma membrane"/>
    <property type="evidence" value="ECO:0000314"/>
    <property type="project" value="MGI"/>
</dbReference>
<dbReference type="GO" id="GO:0005246">
    <property type="term" value="F:calcium channel regulator activity"/>
    <property type="evidence" value="ECO:0000314"/>
    <property type="project" value="MGI"/>
</dbReference>
<dbReference type="GO" id="GO:1903169">
    <property type="term" value="P:regulation of calcium ion transmembrane transport"/>
    <property type="evidence" value="ECO:0000314"/>
    <property type="project" value="MGI"/>
</dbReference>
<dbReference type="InterPro" id="IPR018499">
    <property type="entry name" value="Tetraspanin/Peripherin"/>
</dbReference>
<dbReference type="InterPro" id="IPR000301">
    <property type="entry name" value="Tetraspanin_animals"/>
</dbReference>
<dbReference type="InterPro" id="IPR008952">
    <property type="entry name" value="Tetraspanin_EC2_sf"/>
</dbReference>
<dbReference type="PANTHER" id="PTHR19282">
    <property type="entry name" value="TETRASPANIN"/>
    <property type="match status" value="1"/>
</dbReference>
<dbReference type="PANTHER" id="PTHR19282:SF203">
    <property type="entry name" value="TETRASPANIN-13"/>
    <property type="match status" value="1"/>
</dbReference>
<dbReference type="Pfam" id="PF00335">
    <property type="entry name" value="Tetraspanin"/>
    <property type="match status" value="1"/>
</dbReference>
<dbReference type="PIRSF" id="PIRSF002419">
    <property type="entry name" value="Tetraspanin"/>
    <property type="match status" value="1"/>
</dbReference>
<dbReference type="PRINTS" id="PR00259">
    <property type="entry name" value="TMFOUR"/>
</dbReference>
<dbReference type="SUPFAM" id="SSF48652">
    <property type="entry name" value="Tetraspanin"/>
    <property type="match status" value="1"/>
</dbReference>
<sequence>MVCGGFSCSKNCLCALNLLYTLVSLLLIGIAAWGIGFGLISSLRVVGVVIAVGIFLFLIALVGLIGAVKHHQVLLFFYMIILLLVFIVQFSVSCACLALNREQQGQLLEVGWNNTASARNDIQRNLNCCGFRSYNPNDTCPASCAKSTQKCSSCAPIIGEYAGEVLRFVGGIGLFFSFTEILGVWLTYRYRNQKDPRANPSAFL</sequence>
<keyword id="KW-0325">Glycoprotein</keyword>
<keyword id="KW-0472">Membrane</keyword>
<keyword id="KW-0597">Phosphoprotein</keyword>
<keyword id="KW-1185">Reference proteome</keyword>
<keyword id="KW-0812">Transmembrane</keyword>
<keyword id="KW-1133">Transmembrane helix</keyword>
<organism>
    <name type="scientific">Mus musculus</name>
    <name type="common">Mouse</name>
    <dbReference type="NCBI Taxonomy" id="10090"/>
    <lineage>
        <taxon>Eukaryota</taxon>
        <taxon>Metazoa</taxon>
        <taxon>Chordata</taxon>
        <taxon>Craniata</taxon>
        <taxon>Vertebrata</taxon>
        <taxon>Euteleostomi</taxon>
        <taxon>Mammalia</taxon>
        <taxon>Eutheria</taxon>
        <taxon>Euarchontoglires</taxon>
        <taxon>Glires</taxon>
        <taxon>Rodentia</taxon>
        <taxon>Myomorpha</taxon>
        <taxon>Muroidea</taxon>
        <taxon>Muridae</taxon>
        <taxon>Murinae</taxon>
        <taxon>Mus</taxon>
        <taxon>Mus</taxon>
    </lineage>
</organism>